<keyword id="KW-0150">Chloroplast</keyword>
<keyword id="KW-0472">Membrane</keyword>
<keyword id="KW-0602">Photosynthesis</keyword>
<keyword id="KW-0934">Plastid</keyword>
<keyword id="KW-0677">Repeat</keyword>
<keyword id="KW-0793">Thylakoid</keyword>
<keyword id="KW-0802">TPR repeat</keyword>
<organism>
    <name type="scientific">Solanum bulbocastanum</name>
    <name type="common">Wild potato</name>
    <dbReference type="NCBI Taxonomy" id="147425"/>
    <lineage>
        <taxon>Eukaryota</taxon>
        <taxon>Viridiplantae</taxon>
        <taxon>Streptophyta</taxon>
        <taxon>Embryophyta</taxon>
        <taxon>Tracheophyta</taxon>
        <taxon>Spermatophyta</taxon>
        <taxon>Magnoliopsida</taxon>
        <taxon>eudicotyledons</taxon>
        <taxon>Gunneridae</taxon>
        <taxon>Pentapetalae</taxon>
        <taxon>asterids</taxon>
        <taxon>lamiids</taxon>
        <taxon>Solanales</taxon>
        <taxon>Solanaceae</taxon>
        <taxon>Solanoideae</taxon>
        <taxon>Solaneae</taxon>
        <taxon>Solanum</taxon>
    </lineage>
</organism>
<accession>Q2MII6</accession>
<sequence length="168" mass="19541">MPRSRTNGNFIDKTFSIVANILLRVIPTTSGEKEAFTYYRDGMSAQSEGNYAEALQNYYEAMRLEIDPYDRSYILYNIGLIHTSNGEHTKALEYYFRALERNPFLPQAFNNMAVICHYRGEQAIQQGDSEIAEAWFDQAAEYWKQAIALTPGNYIEAHNWLKITRRFE</sequence>
<gene>
    <name evidence="1" type="primary">ycf3</name>
</gene>
<evidence type="ECO:0000255" key="1">
    <source>
        <dbReference type="HAMAP-Rule" id="MF_00439"/>
    </source>
</evidence>
<comment type="function">
    <text evidence="1">Essential for the assembly of the photosystem I (PSI) complex. May act as a chaperone-like factor to guide the assembly of the PSI subunits.</text>
</comment>
<comment type="subcellular location">
    <subcellularLocation>
        <location evidence="1">Plastid</location>
        <location evidence="1">Chloroplast thylakoid membrane</location>
        <topology evidence="1">Peripheral membrane protein</topology>
    </subcellularLocation>
</comment>
<comment type="similarity">
    <text evidence="1">Belongs to the Ycf3 family.</text>
</comment>
<reference key="1">
    <citation type="journal article" date="2006" name="Theor. Appl. Genet.">
        <title>Complete chloroplast genome sequences of Solanum bulbocastanum, Solanum lycopersicum and comparative analyses with other Solanaceae genomes.</title>
        <authorList>
            <person name="Daniell H."/>
            <person name="Lee S.-B."/>
            <person name="Grevich J."/>
            <person name="Saski C."/>
            <person name="Quesada-Vargas T."/>
            <person name="Guda C."/>
            <person name="Tomkins J."/>
            <person name="Jansen R.K."/>
        </authorList>
    </citation>
    <scope>NUCLEOTIDE SEQUENCE [LARGE SCALE GENOMIC DNA]</scope>
    <source>
        <strain>cv. PT29</strain>
    </source>
</reference>
<name>YCF3_SOLBU</name>
<dbReference type="EMBL" id="DQ347958">
    <property type="protein sequence ID" value="ABC56214.1"/>
    <property type="molecule type" value="Genomic_DNA"/>
</dbReference>
<dbReference type="RefSeq" id="YP_538849.1">
    <property type="nucleotide sequence ID" value="NC_007943.1"/>
</dbReference>
<dbReference type="SMR" id="Q2MII6"/>
<dbReference type="GeneID" id="3989537"/>
<dbReference type="GO" id="GO:0009535">
    <property type="term" value="C:chloroplast thylakoid membrane"/>
    <property type="evidence" value="ECO:0007669"/>
    <property type="project" value="UniProtKB-SubCell"/>
</dbReference>
<dbReference type="GO" id="GO:0015979">
    <property type="term" value="P:photosynthesis"/>
    <property type="evidence" value="ECO:0007669"/>
    <property type="project" value="UniProtKB-UniRule"/>
</dbReference>
<dbReference type="FunFam" id="1.25.40.10:FF:000004">
    <property type="entry name" value="Photosystem I assembly protein Ycf3"/>
    <property type="match status" value="1"/>
</dbReference>
<dbReference type="Gene3D" id="1.25.40.10">
    <property type="entry name" value="Tetratricopeptide repeat domain"/>
    <property type="match status" value="1"/>
</dbReference>
<dbReference type="HAMAP" id="MF_00439">
    <property type="entry name" value="Ycf3"/>
    <property type="match status" value="1"/>
</dbReference>
<dbReference type="InterPro" id="IPR022818">
    <property type="entry name" value="PSI_Ycf3_assembly"/>
</dbReference>
<dbReference type="InterPro" id="IPR011990">
    <property type="entry name" value="TPR-like_helical_dom_sf"/>
</dbReference>
<dbReference type="InterPro" id="IPR019734">
    <property type="entry name" value="TPR_rpt"/>
</dbReference>
<dbReference type="InterPro" id="IPR051685">
    <property type="entry name" value="Ycf3/AcsC/BcsC/TPR_MFPF"/>
</dbReference>
<dbReference type="NCBIfam" id="NF002725">
    <property type="entry name" value="PRK02603.1"/>
    <property type="match status" value="1"/>
</dbReference>
<dbReference type="PANTHER" id="PTHR44943">
    <property type="entry name" value="CELLULOSE SYNTHASE OPERON PROTEIN C"/>
    <property type="match status" value="1"/>
</dbReference>
<dbReference type="PANTHER" id="PTHR44943:SF8">
    <property type="entry name" value="TPR REPEAT-CONTAINING PROTEIN MJ0263"/>
    <property type="match status" value="1"/>
</dbReference>
<dbReference type="Pfam" id="PF00515">
    <property type="entry name" value="TPR_1"/>
    <property type="match status" value="1"/>
</dbReference>
<dbReference type="SMART" id="SM00028">
    <property type="entry name" value="TPR"/>
    <property type="match status" value="3"/>
</dbReference>
<dbReference type="SUPFAM" id="SSF48452">
    <property type="entry name" value="TPR-like"/>
    <property type="match status" value="1"/>
</dbReference>
<dbReference type="PROSITE" id="PS50005">
    <property type="entry name" value="TPR"/>
    <property type="match status" value="3"/>
</dbReference>
<dbReference type="PROSITE" id="PS50293">
    <property type="entry name" value="TPR_REGION"/>
    <property type="match status" value="2"/>
</dbReference>
<geneLocation type="chloroplast"/>
<feature type="chain" id="PRO_0000275636" description="Photosystem I assembly protein Ycf3">
    <location>
        <begin position="1"/>
        <end position="168"/>
    </location>
</feature>
<feature type="repeat" description="TPR 1">
    <location>
        <begin position="35"/>
        <end position="68"/>
    </location>
</feature>
<feature type="repeat" description="TPR 2">
    <location>
        <begin position="72"/>
        <end position="105"/>
    </location>
</feature>
<feature type="repeat" description="TPR 3">
    <location>
        <begin position="120"/>
        <end position="153"/>
    </location>
</feature>
<proteinExistence type="inferred from homology"/>
<protein>
    <recommendedName>
        <fullName evidence="1">Photosystem I assembly protein Ycf3</fullName>
    </recommendedName>
</protein>